<dbReference type="EC" id="2.7.11.1"/>
<dbReference type="EMBL" id="U54615">
    <property type="protein sequence ID" value="AAA99794.1"/>
    <property type="status" value="ALT_SEQ"/>
    <property type="molecule type" value="Genomic_DNA"/>
</dbReference>
<dbReference type="EMBL" id="AF049236">
    <property type="protein sequence ID" value="AAC14412.1"/>
    <property type="status" value="ALT_SEQ"/>
    <property type="molecule type" value="Genomic_DNA"/>
</dbReference>
<dbReference type="EMBL" id="CP002686">
    <property type="protein sequence ID" value="AEE78852.1"/>
    <property type="molecule type" value="Genomic_DNA"/>
</dbReference>
<dbReference type="EMBL" id="AY062539">
    <property type="protein sequence ID" value="AAL32617.1"/>
    <property type="molecule type" value="mRNA"/>
</dbReference>
<dbReference type="EMBL" id="BT003367">
    <property type="protein sequence ID" value="AAO29985.1"/>
    <property type="molecule type" value="mRNA"/>
</dbReference>
<dbReference type="EMBL" id="AK220740">
    <property type="protein sequence ID" value="BAD93899.1"/>
    <property type="molecule type" value="mRNA"/>
</dbReference>
<dbReference type="PIR" id="T51156">
    <property type="entry name" value="T51156"/>
</dbReference>
<dbReference type="RefSeq" id="NP_190753.2">
    <property type="nucleotide sequence ID" value="NM_115044.5"/>
</dbReference>
<dbReference type="SMR" id="Q8W4I7"/>
<dbReference type="BioGRID" id="9666">
    <property type="interactions" value="4"/>
</dbReference>
<dbReference type="FunCoup" id="Q8W4I7">
    <property type="interactions" value="2704"/>
</dbReference>
<dbReference type="IntAct" id="Q8W4I7">
    <property type="interactions" value="3"/>
</dbReference>
<dbReference type="STRING" id="3702.Q8W4I7"/>
<dbReference type="iPTMnet" id="Q8W4I7"/>
<dbReference type="SwissPalm" id="Q8W4I7"/>
<dbReference type="PaxDb" id="3702-AT3G51850.1"/>
<dbReference type="ProteomicsDB" id="222606"/>
<dbReference type="EnsemblPlants" id="AT3G51850.1">
    <property type="protein sequence ID" value="AT3G51850.1"/>
    <property type="gene ID" value="AT3G51850"/>
</dbReference>
<dbReference type="GeneID" id="824348"/>
<dbReference type="Gramene" id="AT3G51850.1">
    <property type="protein sequence ID" value="AT3G51850.1"/>
    <property type="gene ID" value="AT3G51850"/>
</dbReference>
<dbReference type="KEGG" id="ath:AT3G51850"/>
<dbReference type="Araport" id="AT3G51850"/>
<dbReference type="TAIR" id="AT3G51850">
    <property type="gene designation" value="CPK13"/>
</dbReference>
<dbReference type="eggNOG" id="KOG0032">
    <property type="taxonomic scope" value="Eukaryota"/>
</dbReference>
<dbReference type="HOGENOM" id="CLU_000288_37_4_1"/>
<dbReference type="InParanoid" id="Q8W4I7"/>
<dbReference type="OrthoDB" id="1031847at2759"/>
<dbReference type="PhylomeDB" id="Q8W4I7"/>
<dbReference type="PRO" id="PR:Q8W4I7"/>
<dbReference type="Proteomes" id="UP000006548">
    <property type="component" value="Chromosome 3"/>
</dbReference>
<dbReference type="ExpressionAtlas" id="Q8W4I7">
    <property type="expression patterns" value="baseline and differential"/>
</dbReference>
<dbReference type="GO" id="GO:0005829">
    <property type="term" value="C:cytosol"/>
    <property type="evidence" value="ECO:0007005"/>
    <property type="project" value="TAIR"/>
</dbReference>
<dbReference type="GO" id="GO:0005886">
    <property type="term" value="C:plasma membrane"/>
    <property type="evidence" value="ECO:0007005"/>
    <property type="project" value="TAIR"/>
</dbReference>
<dbReference type="GO" id="GO:0005524">
    <property type="term" value="F:ATP binding"/>
    <property type="evidence" value="ECO:0007669"/>
    <property type="project" value="UniProtKB-KW"/>
</dbReference>
<dbReference type="GO" id="GO:0005509">
    <property type="term" value="F:calcium ion binding"/>
    <property type="evidence" value="ECO:0007669"/>
    <property type="project" value="InterPro"/>
</dbReference>
<dbReference type="GO" id="GO:0106310">
    <property type="term" value="F:protein serine kinase activity"/>
    <property type="evidence" value="ECO:0007669"/>
    <property type="project" value="RHEA"/>
</dbReference>
<dbReference type="GO" id="GO:0004674">
    <property type="term" value="F:protein serine/threonine kinase activity"/>
    <property type="evidence" value="ECO:0007005"/>
    <property type="project" value="TAIR"/>
</dbReference>
<dbReference type="GO" id="GO:0046777">
    <property type="term" value="P:protein autophosphorylation"/>
    <property type="evidence" value="ECO:0007005"/>
    <property type="project" value="TAIR"/>
</dbReference>
<dbReference type="CDD" id="cd00051">
    <property type="entry name" value="EFh"/>
    <property type="match status" value="1"/>
</dbReference>
<dbReference type="CDD" id="cd05117">
    <property type="entry name" value="STKc_CAMK"/>
    <property type="match status" value="1"/>
</dbReference>
<dbReference type="FunFam" id="3.30.200.20:FF:000004">
    <property type="entry name" value="Calcium-dependent protein kinase 1"/>
    <property type="match status" value="1"/>
</dbReference>
<dbReference type="FunFam" id="1.10.510.10:FF:000067">
    <property type="entry name" value="calcium-dependent protein kinase 13"/>
    <property type="match status" value="1"/>
</dbReference>
<dbReference type="FunFam" id="1.10.238.10:FF:000050">
    <property type="entry name" value="Calcium-dependent protein kinase 7"/>
    <property type="match status" value="1"/>
</dbReference>
<dbReference type="Gene3D" id="1.10.238.10">
    <property type="entry name" value="EF-hand"/>
    <property type="match status" value="1"/>
</dbReference>
<dbReference type="Gene3D" id="3.30.200.20">
    <property type="entry name" value="Phosphorylase Kinase, domain 1"/>
    <property type="match status" value="1"/>
</dbReference>
<dbReference type="Gene3D" id="1.10.510.10">
    <property type="entry name" value="Transferase(Phosphotransferase) domain 1"/>
    <property type="match status" value="1"/>
</dbReference>
<dbReference type="InterPro" id="IPR050205">
    <property type="entry name" value="CDPK_Ser/Thr_kinases"/>
</dbReference>
<dbReference type="InterPro" id="IPR011992">
    <property type="entry name" value="EF-hand-dom_pair"/>
</dbReference>
<dbReference type="InterPro" id="IPR018247">
    <property type="entry name" value="EF_Hand_1_Ca_BS"/>
</dbReference>
<dbReference type="InterPro" id="IPR002048">
    <property type="entry name" value="EF_hand_dom"/>
</dbReference>
<dbReference type="InterPro" id="IPR011009">
    <property type="entry name" value="Kinase-like_dom_sf"/>
</dbReference>
<dbReference type="InterPro" id="IPR000719">
    <property type="entry name" value="Prot_kinase_dom"/>
</dbReference>
<dbReference type="InterPro" id="IPR017441">
    <property type="entry name" value="Protein_kinase_ATP_BS"/>
</dbReference>
<dbReference type="InterPro" id="IPR008271">
    <property type="entry name" value="Ser/Thr_kinase_AS"/>
</dbReference>
<dbReference type="PANTHER" id="PTHR24349">
    <property type="entry name" value="SERINE/THREONINE-PROTEIN KINASE"/>
    <property type="match status" value="1"/>
</dbReference>
<dbReference type="Pfam" id="PF13499">
    <property type="entry name" value="EF-hand_7"/>
    <property type="match status" value="2"/>
</dbReference>
<dbReference type="Pfam" id="PF00069">
    <property type="entry name" value="Pkinase"/>
    <property type="match status" value="1"/>
</dbReference>
<dbReference type="SMART" id="SM00054">
    <property type="entry name" value="EFh"/>
    <property type="match status" value="4"/>
</dbReference>
<dbReference type="SMART" id="SM00220">
    <property type="entry name" value="S_TKc"/>
    <property type="match status" value="1"/>
</dbReference>
<dbReference type="SUPFAM" id="SSF47473">
    <property type="entry name" value="EF-hand"/>
    <property type="match status" value="1"/>
</dbReference>
<dbReference type="SUPFAM" id="SSF56112">
    <property type="entry name" value="Protein kinase-like (PK-like)"/>
    <property type="match status" value="1"/>
</dbReference>
<dbReference type="PROSITE" id="PS00018">
    <property type="entry name" value="EF_HAND_1"/>
    <property type="match status" value="2"/>
</dbReference>
<dbReference type="PROSITE" id="PS50222">
    <property type="entry name" value="EF_HAND_2"/>
    <property type="match status" value="4"/>
</dbReference>
<dbReference type="PROSITE" id="PS00107">
    <property type="entry name" value="PROTEIN_KINASE_ATP"/>
    <property type="match status" value="1"/>
</dbReference>
<dbReference type="PROSITE" id="PS50011">
    <property type="entry name" value="PROTEIN_KINASE_DOM"/>
    <property type="match status" value="1"/>
</dbReference>
<dbReference type="PROSITE" id="PS00108">
    <property type="entry name" value="PROTEIN_KINASE_ST"/>
    <property type="match status" value="1"/>
</dbReference>
<name>CDPKD_ARATH</name>
<keyword id="KW-0067">ATP-binding</keyword>
<keyword id="KW-0106">Calcium</keyword>
<keyword id="KW-1003">Cell membrane</keyword>
<keyword id="KW-0418">Kinase</keyword>
<keyword id="KW-0449">Lipoprotein</keyword>
<keyword id="KW-0472">Membrane</keyword>
<keyword id="KW-0479">Metal-binding</keyword>
<keyword id="KW-0519">Myristate</keyword>
<keyword id="KW-0547">Nucleotide-binding</keyword>
<keyword id="KW-0597">Phosphoprotein</keyword>
<keyword id="KW-1185">Reference proteome</keyword>
<keyword id="KW-0677">Repeat</keyword>
<keyword id="KW-0723">Serine/threonine-protein kinase</keyword>
<keyword id="KW-0808">Transferase</keyword>
<feature type="initiator methionine" description="Removed" evidence="3">
    <location>
        <position position="1"/>
    </location>
</feature>
<feature type="chain" id="PRO_0000363335" description="Calcium-dependent protein kinase 13">
    <location>
        <begin position="2"/>
        <end position="528"/>
    </location>
</feature>
<feature type="domain" description="Protein kinase" evidence="4">
    <location>
        <begin position="54"/>
        <end position="312"/>
    </location>
</feature>
<feature type="domain" description="EF-hand 1" evidence="5">
    <location>
        <begin position="355"/>
        <end position="390"/>
    </location>
</feature>
<feature type="domain" description="EF-hand 2" evidence="5">
    <location>
        <begin position="391"/>
        <end position="426"/>
    </location>
</feature>
<feature type="domain" description="EF-hand 3" evidence="5">
    <location>
        <begin position="427"/>
        <end position="462"/>
    </location>
</feature>
<feature type="domain" description="EF-hand 4" evidence="5">
    <location>
        <begin position="463"/>
        <end position="498"/>
    </location>
</feature>
<feature type="region of interest" description="Disordered" evidence="7">
    <location>
        <begin position="17"/>
        <end position="37"/>
    </location>
</feature>
<feature type="region of interest" description="Autoinhibitory domain" evidence="1">
    <location>
        <begin position="318"/>
        <end position="348"/>
    </location>
</feature>
<feature type="compositionally biased region" description="Basic and acidic residues" evidence="7">
    <location>
        <begin position="17"/>
        <end position="32"/>
    </location>
</feature>
<feature type="active site" description="Proton acceptor" evidence="4 6">
    <location>
        <position position="178"/>
    </location>
</feature>
<feature type="binding site" evidence="4">
    <location>
        <begin position="60"/>
        <end position="68"/>
    </location>
    <ligand>
        <name>ATP</name>
        <dbReference type="ChEBI" id="CHEBI:30616"/>
    </ligand>
</feature>
<feature type="binding site" evidence="4">
    <location>
        <position position="83"/>
    </location>
    <ligand>
        <name>ATP</name>
        <dbReference type="ChEBI" id="CHEBI:30616"/>
    </ligand>
</feature>
<feature type="binding site" evidence="5">
    <location>
        <position position="368"/>
    </location>
    <ligand>
        <name>Ca(2+)</name>
        <dbReference type="ChEBI" id="CHEBI:29108"/>
        <label>1</label>
    </ligand>
</feature>
<feature type="binding site" evidence="5">
    <location>
        <position position="370"/>
    </location>
    <ligand>
        <name>Ca(2+)</name>
        <dbReference type="ChEBI" id="CHEBI:29108"/>
        <label>1</label>
    </ligand>
</feature>
<feature type="binding site" evidence="5">
    <location>
        <position position="372"/>
    </location>
    <ligand>
        <name>Ca(2+)</name>
        <dbReference type="ChEBI" id="CHEBI:29108"/>
        <label>1</label>
    </ligand>
</feature>
<feature type="binding site" evidence="5">
    <location>
        <position position="379"/>
    </location>
    <ligand>
        <name>Ca(2+)</name>
        <dbReference type="ChEBI" id="CHEBI:29108"/>
        <label>1</label>
    </ligand>
</feature>
<feature type="binding site" evidence="9">
    <location>
        <position position="404"/>
    </location>
    <ligand>
        <name>Ca(2+)</name>
        <dbReference type="ChEBI" id="CHEBI:29108"/>
        <label>2</label>
    </ligand>
</feature>
<feature type="binding site" evidence="9">
    <location>
        <position position="410"/>
    </location>
    <ligand>
        <name>Ca(2+)</name>
        <dbReference type="ChEBI" id="CHEBI:29108"/>
        <label>2</label>
    </ligand>
</feature>
<feature type="binding site" evidence="9">
    <location>
        <position position="415"/>
    </location>
    <ligand>
        <name>Ca(2+)</name>
        <dbReference type="ChEBI" id="CHEBI:29108"/>
        <label>2</label>
    </ligand>
</feature>
<feature type="binding site" evidence="9">
    <location>
        <position position="440"/>
    </location>
    <ligand>
        <name>Ca(2+)</name>
        <dbReference type="ChEBI" id="CHEBI:29108"/>
        <label>3</label>
    </ligand>
</feature>
<feature type="binding site" evidence="9">
    <location>
        <position position="442"/>
    </location>
    <ligand>
        <name>Ca(2+)</name>
        <dbReference type="ChEBI" id="CHEBI:29108"/>
        <label>3</label>
    </ligand>
</feature>
<feature type="binding site" evidence="9">
    <location>
        <position position="444"/>
    </location>
    <ligand>
        <name>Ca(2+)</name>
        <dbReference type="ChEBI" id="CHEBI:29108"/>
        <label>3</label>
    </ligand>
</feature>
<feature type="binding site" evidence="9">
    <location>
        <position position="446"/>
    </location>
    <ligand>
        <name>Ca(2+)</name>
        <dbReference type="ChEBI" id="CHEBI:29108"/>
        <label>3</label>
    </ligand>
</feature>
<feature type="binding site" evidence="9">
    <location>
        <position position="451"/>
    </location>
    <ligand>
        <name>Ca(2+)</name>
        <dbReference type="ChEBI" id="CHEBI:29108"/>
        <label>3</label>
    </ligand>
</feature>
<feature type="binding site" evidence="5">
    <location>
        <position position="476"/>
    </location>
    <ligand>
        <name>Ca(2+)</name>
        <dbReference type="ChEBI" id="CHEBI:29108"/>
        <label>4</label>
    </ligand>
</feature>
<feature type="binding site" evidence="5">
    <location>
        <position position="478"/>
    </location>
    <ligand>
        <name>Ca(2+)</name>
        <dbReference type="ChEBI" id="CHEBI:29108"/>
        <label>4</label>
    </ligand>
</feature>
<feature type="binding site" evidence="5">
    <location>
        <position position="480"/>
    </location>
    <ligand>
        <name>Ca(2+)</name>
        <dbReference type="ChEBI" id="CHEBI:29108"/>
        <label>4</label>
    </ligand>
</feature>
<feature type="binding site" evidence="5">
    <location>
        <position position="482"/>
    </location>
    <ligand>
        <name>Ca(2+)</name>
        <dbReference type="ChEBI" id="CHEBI:29108"/>
        <label>4</label>
    </ligand>
</feature>
<feature type="binding site" evidence="5">
    <location>
        <position position="487"/>
    </location>
    <ligand>
        <name>Ca(2+)</name>
        <dbReference type="ChEBI" id="CHEBI:29108"/>
        <label>4</label>
    </ligand>
</feature>
<feature type="modified residue" description="Phosphoserine" evidence="10 11 12">
    <location>
        <position position="43"/>
    </location>
</feature>
<feature type="modified residue" description="Phosphoserine" evidence="2">
    <location>
        <position position="218"/>
    </location>
</feature>
<feature type="modified residue" description="Phosphoserine" evidence="2">
    <location>
        <position position="484"/>
    </location>
</feature>
<feature type="modified residue" description="Phosphoserine" evidence="12">
    <location>
        <position position="522"/>
    </location>
</feature>
<feature type="lipid moiety-binding region" description="N-myristoyl glycine" evidence="8">
    <location>
        <position position="2"/>
    </location>
</feature>
<feature type="sequence conflict" description="In Ref. 4; AAL32617/AAO29985." evidence="9" ref="4">
    <original>E</original>
    <variation>K</variation>
    <location>
        <position position="350"/>
    </location>
</feature>
<evidence type="ECO:0000250" key="1"/>
<evidence type="ECO:0000250" key="2">
    <source>
        <dbReference type="UniProtKB" id="Q9FKW4"/>
    </source>
</evidence>
<evidence type="ECO:0000255" key="3"/>
<evidence type="ECO:0000255" key="4">
    <source>
        <dbReference type="PROSITE-ProRule" id="PRU00159"/>
    </source>
</evidence>
<evidence type="ECO:0000255" key="5">
    <source>
        <dbReference type="PROSITE-ProRule" id="PRU00448"/>
    </source>
</evidence>
<evidence type="ECO:0000255" key="6">
    <source>
        <dbReference type="PROSITE-ProRule" id="PRU10027"/>
    </source>
</evidence>
<evidence type="ECO:0000256" key="7">
    <source>
        <dbReference type="SAM" id="MobiDB-lite"/>
    </source>
</evidence>
<evidence type="ECO:0000269" key="8">
    <source>
    </source>
</evidence>
<evidence type="ECO:0000305" key="9"/>
<evidence type="ECO:0007744" key="10">
    <source>
    </source>
</evidence>
<evidence type="ECO:0007744" key="11">
    <source>
    </source>
</evidence>
<evidence type="ECO:0007744" key="12">
    <source>
    </source>
</evidence>
<comment type="function">
    <text>May play a role in signal transduction pathways that involve calcium as a second messenger.</text>
</comment>
<comment type="catalytic activity">
    <reaction>
        <text>L-seryl-[protein] + ATP = O-phospho-L-seryl-[protein] + ADP + H(+)</text>
        <dbReference type="Rhea" id="RHEA:17989"/>
        <dbReference type="Rhea" id="RHEA-COMP:9863"/>
        <dbReference type="Rhea" id="RHEA-COMP:11604"/>
        <dbReference type="ChEBI" id="CHEBI:15378"/>
        <dbReference type="ChEBI" id="CHEBI:29999"/>
        <dbReference type="ChEBI" id="CHEBI:30616"/>
        <dbReference type="ChEBI" id="CHEBI:83421"/>
        <dbReference type="ChEBI" id="CHEBI:456216"/>
        <dbReference type="EC" id="2.7.11.1"/>
    </reaction>
</comment>
<comment type="catalytic activity">
    <reaction>
        <text>L-threonyl-[protein] + ATP = O-phospho-L-threonyl-[protein] + ADP + H(+)</text>
        <dbReference type="Rhea" id="RHEA:46608"/>
        <dbReference type="Rhea" id="RHEA-COMP:11060"/>
        <dbReference type="Rhea" id="RHEA-COMP:11605"/>
        <dbReference type="ChEBI" id="CHEBI:15378"/>
        <dbReference type="ChEBI" id="CHEBI:30013"/>
        <dbReference type="ChEBI" id="CHEBI:30616"/>
        <dbReference type="ChEBI" id="CHEBI:61977"/>
        <dbReference type="ChEBI" id="CHEBI:456216"/>
        <dbReference type="EC" id="2.7.11.1"/>
    </reaction>
</comment>
<comment type="activity regulation">
    <text evidence="1">Activated by calcium. Autophosphorylation may play an important role in the regulation of the kinase activity (By similarity).</text>
</comment>
<comment type="subcellular location">
    <subcellularLocation>
        <location evidence="8">Cell membrane</location>
        <topology evidence="8">Lipid-anchor</topology>
    </subcellularLocation>
</comment>
<comment type="domain">
    <text evidence="1">There are 3 contiguous domains conserved in the CDPK subfamily: a kinase domain, an autoinhibitory (junction) domain and a calmodulin-like domain. The autoinhibitory domain (318-348) inactivates kinase activity under calcium-free conditions (By similarity).</text>
</comment>
<comment type="similarity">
    <text evidence="4">Belongs to the protein kinase superfamily. Ser/Thr protein kinase family. CDPK subfamily.</text>
</comment>
<comment type="sequence caution" evidence="9">
    <conflict type="erroneous gene model prediction">
        <sequence resource="EMBL-CDS" id="AAA99794"/>
    </conflict>
</comment>
<comment type="sequence caution" evidence="9">
    <conflict type="erroneous gene model prediction">
        <sequence resource="EMBL-CDS" id="AAC14412"/>
    </conflict>
</comment>
<sequence>MGNCCRSPAAVAREDVKSNYSGHDHARKDAAGGKKSAPIRVLSDVPKENIEDRYLLDRELGRGEFGVTYLCIERSSRDLLACKSISKRKLRTAVDIEDVKREVAIMKHLPKSSSIVTLKEACEDDNAVHLVMELCEGGELFDRIVARGHYTERAAAGVTKTIVEVVQLCHKHGVIHRDLKPENFLFANKKENSPLKAIDFGLSIFFKPGEKFSEIVGSPYYMAPEVLKRNYGPEIDIWSAGVILYILLCGVPPFWAESEQGVAQAILRGVIDFKREPWPNISETAKNLVRQMLEPDPKRRLTAKQVLEHPWIQNAKKAPNVPLGDVVKSRLKQFSVMNRFKRKALRVIAEFLSTEEVEDIKVMFNKMDTDNDGIVSIEELKAGLRDFSTQLAESEVQMLIEAVDTKGKGTLDYGEFVAVSLHLQKVANDEHLRKAFSYFDKDGNGYILPQELCDALKEDGGDDCVDVANDIFQEVDTDKDGRISYEEFAAMMKTGTDWRKASRHYSRGRFNSLSIKLMKDGSLNLGNE</sequence>
<reference key="1">
    <citation type="submission" date="1996-04" db="EMBL/GenBank/DDBJ databases">
        <title>A new member of the calcium-dependent protein kinase gene family in Arabidopsis thaliana.</title>
        <authorList>
            <person name="Grellet F."/>
            <person name="Wu H.-J."/>
            <person name="Gaubier-Comella P."/>
            <person name="Berger C."/>
            <person name="Mares G."/>
            <person name="Delseny M."/>
        </authorList>
    </citation>
    <scope>NUCLEOTIDE SEQUENCE [GENOMIC DNA]</scope>
    <source>
        <strain>cv. Columbia</strain>
    </source>
</reference>
<reference key="2">
    <citation type="journal article" date="1999" name="Plant Mol. Biol.">
        <title>Fine sequence analysis of 60 kb around the Arabidopsis thaliana AtEm1 locus on chromosome III.</title>
        <authorList>
            <person name="Comella P."/>
            <person name="Wu H.-J."/>
            <person name="Laudie M."/>
            <person name="Berger C."/>
            <person name="Cooke R."/>
            <person name="Delseny M."/>
            <person name="Grellet F."/>
        </authorList>
    </citation>
    <scope>NUCLEOTIDE SEQUENCE [LARGE SCALE GENOMIC DNA]</scope>
    <source>
        <strain>cv. Columbia</strain>
    </source>
</reference>
<reference key="3">
    <citation type="journal article" date="2017" name="Plant J.">
        <title>Araport11: a complete reannotation of the Arabidopsis thaliana reference genome.</title>
        <authorList>
            <person name="Cheng C.Y."/>
            <person name="Krishnakumar V."/>
            <person name="Chan A.P."/>
            <person name="Thibaud-Nissen F."/>
            <person name="Schobel S."/>
            <person name="Town C.D."/>
        </authorList>
    </citation>
    <scope>GENOME REANNOTATION</scope>
    <source>
        <strain>cv. Columbia</strain>
    </source>
</reference>
<reference key="4">
    <citation type="journal article" date="2003" name="Science">
        <title>Empirical analysis of transcriptional activity in the Arabidopsis genome.</title>
        <authorList>
            <person name="Yamada K."/>
            <person name="Lim J."/>
            <person name="Dale J.M."/>
            <person name="Chen H."/>
            <person name="Shinn P."/>
            <person name="Palm C.J."/>
            <person name="Southwick A.M."/>
            <person name="Wu H.C."/>
            <person name="Kim C.J."/>
            <person name="Nguyen M."/>
            <person name="Pham P.K."/>
            <person name="Cheuk R.F."/>
            <person name="Karlin-Newmann G."/>
            <person name="Liu S.X."/>
            <person name="Lam B."/>
            <person name="Sakano H."/>
            <person name="Wu T."/>
            <person name="Yu G."/>
            <person name="Miranda M."/>
            <person name="Quach H.L."/>
            <person name="Tripp M."/>
            <person name="Chang C.H."/>
            <person name="Lee J.M."/>
            <person name="Toriumi M.J."/>
            <person name="Chan M.M."/>
            <person name="Tang C.C."/>
            <person name="Onodera C.S."/>
            <person name="Deng J.M."/>
            <person name="Akiyama K."/>
            <person name="Ansari Y."/>
            <person name="Arakawa T."/>
            <person name="Banh J."/>
            <person name="Banno F."/>
            <person name="Bowser L."/>
            <person name="Brooks S.Y."/>
            <person name="Carninci P."/>
            <person name="Chao Q."/>
            <person name="Choy N."/>
            <person name="Enju A."/>
            <person name="Goldsmith A.D."/>
            <person name="Gurjal M."/>
            <person name="Hansen N.F."/>
            <person name="Hayashizaki Y."/>
            <person name="Johnson-Hopson C."/>
            <person name="Hsuan V.W."/>
            <person name="Iida K."/>
            <person name="Karnes M."/>
            <person name="Khan S."/>
            <person name="Koesema E."/>
            <person name="Ishida J."/>
            <person name="Jiang P.X."/>
            <person name="Jones T."/>
            <person name="Kawai J."/>
            <person name="Kamiya A."/>
            <person name="Meyers C."/>
            <person name="Nakajima M."/>
            <person name="Narusaka M."/>
            <person name="Seki M."/>
            <person name="Sakurai T."/>
            <person name="Satou M."/>
            <person name="Tamse R."/>
            <person name="Vaysberg M."/>
            <person name="Wallender E.K."/>
            <person name="Wong C."/>
            <person name="Yamamura Y."/>
            <person name="Yuan S."/>
            <person name="Shinozaki K."/>
            <person name="Davis R.W."/>
            <person name="Theologis A."/>
            <person name="Ecker J.R."/>
        </authorList>
    </citation>
    <scope>NUCLEOTIDE SEQUENCE [LARGE SCALE MRNA]</scope>
    <source>
        <strain>cv. Columbia</strain>
    </source>
</reference>
<reference key="5">
    <citation type="submission" date="2005-03" db="EMBL/GenBank/DDBJ databases">
        <title>Large-scale analysis of RIKEN Arabidopsis full-length (RAFL) cDNAs.</title>
        <authorList>
            <person name="Totoki Y."/>
            <person name="Seki M."/>
            <person name="Ishida J."/>
            <person name="Nakajima M."/>
            <person name="Enju A."/>
            <person name="Kamiya A."/>
            <person name="Narusaka M."/>
            <person name="Shin-i T."/>
            <person name="Nakagawa M."/>
            <person name="Sakamoto N."/>
            <person name="Oishi K."/>
            <person name="Kohara Y."/>
            <person name="Kobayashi M."/>
            <person name="Toyoda A."/>
            <person name="Sakaki Y."/>
            <person name="Sakurai T."/>
            <person name="Iida K."/>
            <person name="Akiyama K."/>
            <person name="Satou M."/>
            <person name="Toyoda T."/>
            <person name="Konagaya A."/>
            <person name="Carninci P."/>
            <person name="Kawai J."/>
            <person name="Hayashizaki Y."/>
            <person name="Shinozaki K."/>
        </authorList>
    </citation>
    <scope>NUCLEOTIDE SEQUENCE [LARGE SCALE MRNA] OF 418-528</scope>
    <source>
        <strain>cv. Columbia</strain>
    </source>
</reference>
<reference key="6">
    <citation type="journal article" date="2001" name="New Phytol.">
        <title>The CDPK superfamily of protein kinases.</title>
        <authorList>
            <person name="Harmon A.C."/>
            <person name="Gribskov M."/>
            <person name="Gubrium E."/>
            <person name="Harper J.F."/>
        </authorList>
    </citation>
    <scope>GENE FAMILY</scope>
    <scope>NOMENCLATURE</scope>
</reference>
<reference key="7">
    <citation type="journal article" date="2002" name="Plant Physiol.">
        <title>Calcium signaling through protein kinases. The Arabidopsis calcium-dependent protein kinase gene family.</title>
        <authorList>
            <person name="Cheng S.-H."/>
            <person name="Willmann M.R."/>
            <person name="Chen H.-C."/>
            <person name="Sheen J."/>
        </authorList>
    </citation>
    <scope>GENE FAMILY</scope>
    <scope>NOMENCLATURE</scope>
</reference>
<reference key="8">
    <citation type="journal article" date="2003" name="Plant Physiol.">
        <title>The Arabidopsis CDPK-SnRK superfamily of protein kinases.</title>
        <authorList>
            <person name="Hrabak E.M."/>
            <person name="Chan C.W.M."/>
            <person name="Gribskov M."/>
            <person name="Harper J.F."/>
            <person name="Choi J.H."/>
            <person name="Halford N."/>
            <person name="Kudla J."/>
            <person name="Luan S."/>
            <person name="Nimmo H.G."/>
            <person name="Sussman M.R."/>
            <person name="Thomas M."/>
            <person name="Walker-Simmons K."/>
            <person name="Zhu J.-K."/>
            <person name="Harmon A.C."/>
        </authorList>
    </citation>
    <scope>GENE FAMILY</scope>
    <scope>NOMENCLATURE</scope>
</reference>
<reference key="9">
    <citation type="journal article" date="2004" name="Plant Cell">
        <title>Phosphoproteomics of the Arabidopsis plasma membrane and a new phosphorylation site database.</title>
        <authorList>
            <person name="Nuehse T.S."/>
            <person name="Stensballe A."/>
            <person name="Jensen O.N."/>
            <person name="Peck S.C."/>
        </authorList>
    </citation>
    <scope>PHOSPHORYLATION [LARGE SCALE ANALYSIS] AT SER-43</scope>
    <scope>IDENTIFICATION BY MASS SPECTROMETRY [LARGE SCALE ANALYSIS]</scope>
</reference>
<reference key="10">
    <citation type="journal article" date="2008" name="Cell Cycle">
        <title>Experimental testing of predicted myristoylation targets involved in asymmetric cell division and calcium-dependent signalling.</title>
        <authorList>
            <person name="Benetka W."/>
            <person name="Mehlmer N."/>
            <person name="Maurer-Stroh S."/>
            <person name="Sammer M."/>
            <person name="Koranda M."/>
            <person name="Neumueller R."/>
            <person name="Betschinger J."/>
            <person name="Knoblich J.A."/>
            <person name="Teige M."/>
            <person name="Eisenhaber F."/>
        </authorList>
    </citation>
    <scope>MYRISTOYLATION AT GLY-2</scope>
    <scope>SUBCELLULAR LOCATION</scope>
</reference>
<reference key="11">
    <citation type="journal article" date="2009" name="J. Proteomics">
        <title>Phosphoproteomic analysis of nuclei-enriched fractions from Arabidopsis thaliana.</title>
        <authorList>
            <person name="Jones A.M.E."/>
            <person name="MacLean D."/>
            <person name="Studholme D.J."/>
            <person name="Serna-Sanz A."/>
            <person name="Andreasson E."/>
            <person name="Rathjen J.P."/>
            <person name="Peck S.C."/>
        </authorList>
    </citation>
    <scope>PHOSPHORYLATION [LARGE SCALE ANALYSIS] AT SER-43</scope>
    <scope>IDENTIFICATION BY MASS SPECTROMETRY [LARGE SCALE ANALYSIS]</scope>
    <source>
        <strain>cv. Columbia</strain>
    </source>
</reference>
<reference key="12">
    <citation type="journal article" date="2009" name="Plant Physiol.">
        <title>Large-scale Arabidopsis phosphoproteome profiling reveals novel chloroplast kinase substrates and phosphorylation networks.</title>
        <authorList>
            <person name="Reiland S."/>
            <person name="Messerli G."/>
            <person name="Baerenfaller K."/>
            <person name="Gerrits B."/>
            <person name="Endler A."/>
            <person name="Grossmann J."/>
            <person name="Gruissem W."/>
            <person name="Baginsky S."/>
        </authorList>
    </citation>
    <scope>PHOSPHORYLATION [LARGE SCALE ANALYSIS] AT SER-43 AND SER-522</scope>
    <scope>IDENTIFICATION BY MASS SPECTROMETRY [LARGE SCALE ANALYSIS]</scope>
</reference>
<proteinExistence type="evidence at protein level"/>
<protein>
    <recommendedName>
        <fullName>Calcium-dependent protein kinase 13</fullName>
        <ecNumber>2.7.11.1</ecNumber>
    </recommendedName>
</protein>
<gene>
    <name type="primary">CPK13</name>
    <name type="ordered locus">At3g51850</name>
    <name type="ORF">ATEM1.10</name>
</gene>
<organism>
    <name type="scientific">Arabidopsis thaliana</name>
    <name type="common">Mouse-ear cress</name>
    <dbReference type="NCBI Taxonomy" id="3702"/>
    <lineage>
        <taxon>Eukaryota</taxon>
        <taxon>Viridiplantae</taxon>
        <taxon>Streptophyta</taxon>
        <taxon>Embryophyta</taxon>
        <taxon>Tracheophyta</taxon>
        <taxon>Spermatophyta</taxon>
        <taxon>Magnoliopsida</taxon>
        <taxon>eudicotyledons</taxon>
        <taxon>Gunneridae</taxon>
        <taxon>Pentapetalae</taxon>
        <taxon>rosids</taxon>
        <taxon>malvids</taxon>
        <taxon>Brassicales</taxon>
        <taxon>Brassicaceae</taxon>
        <taxon>Camelineae</taxon>
        <taxon>Arabidopsis</taxon>
    </lineage>
</organism>
<accession>Q8W4I7</accession>
<accession>Q570G8</accession>
<accession>Q96294</accession>